<sequence>MLEFDTITAIATVLGEGGISIIRISGENSLSIANSIFRGKNHRDLLDIKPYSMRYGFIIEKDTGEILDEVLVSFMKGPKSYTAEDIVEINCHGGVLATRKVMEEVIKAGARLAEPGEFTKRAFLNGRIDLSQAEAVIDIIRAKSHISVKSAVQQSQGKISKEINLLREELLEIIAHIEATVNYPEEDLEEMTSDQIYLKINKILDEINYILSNAEEGKIVREGLSVVIVGKPNVGKSSLLNSLIEENKAIVTDIPGTTRDVIEEYMNIGGIPIKIVDTAGIRKTDDIVEKIGVEKSKEKIDESDLVILMLDSSKELDEEDKEIINYVNHRKYIILLNKTDIGDKIDLNDICNLNSRFIIKTSIKNGEGLDKIKNCIKELFFKGEIKSEDLFITNTRHKEGLIRAKESCIEALQTLKSTLSIDLVSIDIKNAWINLGKITGDTLEEDIIDKIFSQFCLGK</sequence>
<dbReference type="EC" id="3.6.-.-" evidence="1"/>
<dbReference type="EMBL" id="CP000673">
    <property type="protein sequence ID" value="EDK35897.1"/>
    <property type="molecule type" value="Genomic_DNA"/>
</dbReference>
<dbReference type="RefSeq" id="WP_012104234.1">
    <property type="nucleotide sequence ID" value="NC_009706.1"/>
</dbReference>
<dbReference type="SMR" id="A5N451"/>
<dbReference type="STRING" id="431943.CKL_3921"/>
<dbReference type="KEGG" id="ckl:CKL_3921"/>
<dbReference type="eggNOG" id="COG0486">
    <property type="taxonomic scope" value="Bacteria"/>
</dbReference>
<dbReference type="HOGENOM" id="CLU_019624_4_1_9"/>
<dbReference type="Proteomes" id="UP000002411">
    <property type="component" value="Chromosome"/>
</dbReference>
<dbReference type="GO" id="GO:0005829">
    <property type="term" value="C:cytosol"/>
    <property type="evidence" value="ECO:0007669"/>
    <property type="project" value="TreeGrafter"/>
</dbReference>
<dbReference type="GO" id="GO:0005525">
    <property type="term" value="F:GTP binding"/>
    <property type="evidence" value="ECO:0007669"/>
    <property type="project" value="UniProtKB-UniRule"/>
</dbReference>
<dbReference type="GO" id="GO:0003924">
    <property type="term" value="F:GTPase activity"/>
    <property type="evidence" value="ECO:0007669"/>
    <property type="project" value="UniProtKB-UniRule"/>
</dbReference>
<dbReference type="GO" id="GO:0046872">
    <property type="term" value="F:metal ion binding"/>
    <property type="evidence" value="ECO:0007669"/>
    <property type="project" value="UniProtKB-KW"/>
</dbReference>
<dbReference type="GO" id="GO:0030488">
    <property type="term" value="P:tRNA methylation"/>
    <property type="evidence" value="ECO:0007669"/>
    <property type="project" value="TreeGrafter"/>
</dbReference>
<dbReference type="GO" id="GO:0002098">
    <property type="term" value="P:tRNA wobble uridine modification"/>
    <property type="evidence" value="ECO:0007669"/>
    <property type="project" value="TreeGrafter"/>
</dbReference>
<dbReference type="CDD" id="cd04164">
    <property type="entry name" value="trmE"/>
    <property type="match status" value="1"/>
</dbReference>
<dbReference type="CDD" id="cd14858">
    <property type="entry name" value="TrmE_N"/>
    <property type="match status" value="1"/>
</dbReference>
<dbReference type="FunFam" id="3.30.1360.120:FF:000003">
    <property type="entry name" value="tRNA modification GTPase MnmE"/>
    <property type="match status" value="1"/>
</dbReference>
<dbReference type="FunFam" id="3.40.50.300:FF:000494">
    <property type="entry name" value="tRNA modification GTPase MnmE"/>
    <property type="match status" value="1"/>
</dbReference>
<dbReference type="Gene3D" id="3.40.50.300">
    <property type="entry name" value="P-loop containing nucleotide triphosphate hydrolases"/>
    <property type="match status" value="1"/>
</dbReference>
<dbReference type="Gene3D" id="3.30.1360.120">
    <property type="entry name" value="Probable tRNA modification gtpase trme, domain 1"/>
    <property type="match status" value="1"/>
</dbReference>
<dbReference type="Gene3D" id="1.20.120.430">
    <property type="entry name" value="tRNA modification GTPase MnmE domain 2"/>
    <property type="match status" value="1"/>
</dbReference>
<dbReference type="HAMAP" id="MF_00379">
    <property type="entry name" value="GTPase_MnmE"/>
    <property type="match status" value="1"/>
</dbReference>
<dbReference type="InterPro" id="IPR031168">
    <property type="entry name" value="G_TrmE"/>
</dbReference>
<dbReference type="InterPro" id="IPR006073">
    <property type="entry name" value="GTP-bd"/>
</dbReference>
<dbReference type="InterPro" id="IPR018948">
    <property type="entry name" value="GTP-bd_TrmE_N"/>
</dbReference>
<dbReference type="InterPro" id="IPR004520">
    <property type="entry name" value="GTPase_MnmE"/>
</dbReference>
<dbReference type="InterPro" id="IPR027368">
    <property type="entry name" value="MnmE_dom2"/>
</dbReference>
<dbReference type="InterPro" id="IPR025867">
    <property type="entry name" value="MnmE_helical"/>
</dbReference>
<dbReference type="InterPro" id="IPR027417">
    <property type="entry name" value="P-loop_NTPase"/>
</dbReference>
<dbReference type="InterPro" id="IPR005225">
    <property type="entry name" value="Small_GTP-bd"/>
</dbReference>
<dbReference type="InterPro" id="IPR027266">
    <property type="entry name" value="TrmE/GcvT_dom1"/>
</dbReference>
<dbReference type="NCBIfam" id="TIGR00450">
    <property type="entry name" value="mnmE_trmE_thdF"/>
    <property type="match status" value="1"/>
</dbReference>
<dbReference type="NCBIfam" id="NF003661">
    <property type="entry name" value="PRK05291.1-3"/>
    <property type="match status" value="1"/>
</dbReference>
<dbReference type="NCBIfam" id="TIGR00231">
    <property type="entry name" value="small_GTP"/>
    <property type="match status" value="1"/>
</dbReference>
<dbReference type="PANTHER" id="PTHR42714">
    <property type="entry name" value="TRNA MODIFICATION GTPASE GTPBP3"/>
    <property type="match status" value="1"/>
</dbReference>
<dbReference type="PANTHER" id="PTHR42714:SF2">
    <property type="entry name" value="TRNA MODIFICATION GTPASE GTPBP3, MITOCHONDRIAL"/>
    <property type="match status" value="1"/>
</dbReference>
<dbReference type="Pfam" id="PF01926">
    <property type="entry name" value="MMR_HSR1"/>
    <property type="match status" value="1"/>
</dbReference>
<dbReference type="Pfam" id="PF12631">
    <property type="entry name" value="MnmE_helical"/>
    <property type="match status" value="1"/>
</dbReference>
<dbReference type="Pfam" id="PF10396">
    <property type="entry name" value="TrmE_N"/>
    <property type="match status" value="1"/>
</dbReference>
<dbReference type="SUPFAM" id="SSF52540">
    <property type="entry name" value="P-loop containing nucleoside triphosphate hydrolases"/>
    <property type="match status" value="1"/>
</dbReference>
<dbReference type="SUPFAM" id="SSF116878">
    <property type="entry name" value="TrmE connector domain"/>
    <property type="match status" value="1"/>
</dbReference>
<dbReference type="PROSITE" id="PS51709">
    <property type="entry name" value="G_TRME"/>
    <property type="match status" value="1"/>
</dbReference>
<keyword id="KW-0963">Cytoplasm</keyword>
<keyword id="KW-0342">GTP-binding</keyword>
<keyword id="KW-0378">Hydrolase</keyword>
<keyword id="KW-0460">Magnesium</keyword>
<keyword id="KW-0479">Metal-binding</keyword>
<keyword id="KW-0547">Nucleotide-binding</keyword>
<keyword id="KW-0630">Potassium</keyword>
<keyword id="KW-1185">Reference proteome</keyword>
<keyword id="KW-0819">tRNA processing</keyword>
<protein>
    <recommendedName>
        <fullName evidence="1">tRNA modification GTPase MnmE</fullName>
        <ecNumber evidence="1">3.6.-.-</ecNumber>
    </recommendedName>
</protein>
<evidence type="ECO:0000255" key="1">
    <source>
        <dbReference type="HAMAP-Rule" id="MF_00379"/>
    </source>
</evidence>
<feature type="chain" id="PRO_1000080003" description="tRNA modification GTPase MnmE">
    <location>
        <begin position="1"/>
        <end position="459"/>
    </location>
</feature>
<feature type="domain" description="TrmE-type G">
    <location>
        <begin position="223"/>
        <end position="381"/>
    </location>
</feature>
<feature type="binding site" evidence="1">
    <location>
        <position position="23"/>
    </location>
    <ligand>
        <name>(6S)-5-formyl-5,6,7,8-tetrahydrofolate</name>
        <dbReference type="ChEBI" id="CHEBI:57457"/>
    </ligand>
</feature>
<feature type="binding site" evidence="1">
    <location>
        <position position="88"/>
    </location>
    <ligand>
        <name>(6S)-5-formyl-5,6,7,8-tetrahydrofolate</name>
        <dbReference type="ChEBI" id="CHEBI:57457"/>
    </ligand>
</feature>
<feature type="binding site" evidence="1">
    <location>
        <position position="127"/>
    </location>
    <ligand>
        <name>(6S)-5-formyl-5,6,7,8-tetrahydrofolate</name>
        <dbReference type="ChEBI" id="CHEBI:57457"/>
    </ligand>
</feature>
<feature type="binding site" evidence="1">
    <location>
        <begin position="233"/>
        <end position="238"/>
    </location>
    <ligand>
        <name>GTP</name>
        <dbReference type="ChEBI" id="CHEBI:37565"/>
    </ligand>
</feature>
<feature type="binding site" evidence="1">
    <location>
        <position position="233"/>
    </location>
    <ligand>
        <name>K(+)</name>
        <dbReference type="ChEBI" id="CHEBI:29103"/>
    </ligand>
</feature>
<feature type="binding site" evidence="1">
    <location>
        <position position="237"/>
    </location>
    <ligand>
        <name>Mg(2+)</name>
        <dbReference type="ChEBI" id="CHEBI:18420"/>
    </ligand>
</feature>
<feature type="binding site" evidence="1">
    <location>
        <begin position="252"/>
        <end position="258"/>
    </location>
    <ligand>
        <name>GTP</name>
        <dbReference type="ChEBI" id="CHEBI:37565"/>
    </ligand>
</feature>
<feature type="binding site" evidence="1">
    <location>
        <position position="252"/>
    </location>
    <ligand>
        <name>K(+)</name>
        <dbReference type="ChEBI" id="CHEBI:29103"/>
    </ligand>
</feature>
<feature type="binding site" evidence="1">
    <location>
        <position position="254"/>
    </location>
    <ligand>
        <name>K(+)</name>
        <dbReference type="ChEBI" id="CHEBI:29103"/>
    </ligand>
</feature>
<feature type="binding site" evidence="1">
    <location>
        <position position="257"/>
    </location>
    <ligand>
        <name>K(+)</name>
        <dbReference type="ChEBI" id="CHEBI:29103"/>
    </ligand>
</feature>
<feature type="binding site" evidence="1">
    <location>
        <position position="258"/>
    </location>
    <ligand>
        <name>Mg(2+)</name>
        <dbReference type="ChEBI" id="CHEBI:18420"/>
    </ligand>
</feature>
<feature type="binding site" evidence="1">
    <location>
        <begin position="277"/>
        <end position="280"/>
    </location>
    <ligand>
        <name>GTP</name>
        <dbReference type="ChEBI" id="CHEBI:37565"/>
    </ligand>
</feature>
<feature type="binding site" evidence="1">
    <location>
        <position position="459"/>
    </location>
    <ligand>
        <name>(6S)-5-formyl-5,6,7,8-tetrahydrofolate</name>
        <dbReference type="ChEBI" id="CHEBI:57457"/>
    </ligand>
</feature>
<organism>
    <name type="scientific">Clostridium kluyveri (strain ATCC 8527 / DSM 555 / NBRC 12016 / NCIMB 10680 / K1)</name>
    <dbReference type="NCBI Taxonomy" id="431943"/>
    <lineage>
        <taxon>Bacteria</taxon>
        <taxon>Bacillati</taxon>
        <taxon>Bacillota</taxon>
        <taxon>Clostridia</taxon>
        <taxon>Eubacteriales</taxon>
        <taxon>Clostridiaceae</taxon>
        <taxon>Clostridium</taxon>
    </lineage>
</organism>
<name>MNME_CLOK5</name>
<proteinExistence type="inferred from homology"/>
<gene>
    <name evidence="1" type="primary">mnmE</name>
    <name evidence="1" type="synonym">trmE</name>
    <name type="ordered locus">CKL_3921</name>
</gene>
<accession>A5N451</accession>
<comment type="function">
    <text evidence="1">Exhibits a very high intrinsic GTPase hydrolysis rate. Involved in the addition of a carboxymethylaminomethyl (cmnm) group at the wobble position (U34) of certain tRNAs, forming tRNA-cmnm(5)s(2)U34.</text>
</comment>
<comment type="cofactor">
    <cofactor evidence="1">
        <name>K(+)</name>
        <dbReference type="ChEBI" id="CHEBI:29103"/>
    </cofactor>
    <text evidence="1">Binds 1 potassium ion per subunit.</text>
</comment>
<comment type="subunit">
    <text evidence="1">Homodimer. Heterotetramer of two MnmE and two MnmG subunits.</text>
</comment>
<comment type="subcellular location">
    <subcellularLocation>
        <location evidence="1">Cytoplasm</location>
    </subcellularLocation>
</comment>
<comment type="similarity">
    <text evidence="1">Belongs to the TRAFAC class TrmE-Era-EngA-EngB-Septin-like GTPase superfamily. TrmE GTPase family.</text>
</comment>
<reference key="1">
    <citation type="journal article" date="2008" name="Proc. Natl. Acad. Sci. U.S.A.">
        <title>The genome of Clostridium kluyveri, a strict anaerobe with unique metabolic features.</title>
        <authorList>
            <person name="Seedorf H."/>
            <person name="Fricke W.F."/>
            <person name="Veith B."/>
            <person name="Brueggemann H."/>
            <person name="Liesegang H."/>
            <person name="Strittmatter A."/>
            <person name="Miethke M."/>
            <person name="Buckel W."/>
            <person name="Hinderberger J."/>
            <person name="Li F."/>
            <person name="Hagemeier C."/>
            <person name="Thauer R.K."/>
            <person name="Gottschalk G."/>
        </authorList>
    </citation>
    <scope>NUCLEOTIDE SEQUENCE [LARGE SCALE GENOMIC DNA]</scope>
    <source>
        <strain>ATCC 8527 / DSM 555 / NBRC 12016 / NCIMB 10680 / K1</strain>
    </source>
</reference>